<sequence length="302" mass="33860">KYLEVLDFNHIDGCCESVSLQSGKEAVENLDTGKDSKKDTSGKGDKPQNSQTGQGSKEQTKIGTVSKDVNVGSKGKEVPRLQKITKKMNLPTVGGKIILSLDHLLEYKPNQVDLFNTRATKTEFESWYSAVKIEYDLNDEQMGVIMNGFMVWCIDNGTSPDVNGVWVMMDGEEQVEYPLKPIVENAKPTLRQIMHHFSDAAEAYIEMRNSESPYMPRYGLLRNLRDRELARYAFDFYEVTSKTPNRAREAIAQMKAAALAGINSRLFGLDGNISTNSENTERHTARDVNQNMHTLLGMGPPQ</sequence>
<dbReference type="EC" id="2.7.7.48"/>
<dbReference type="EMBL" id="D00535">
    <property type="protein sequence ID" value="BAA00423.1"/>
    <property type="molecule type" value="Genomic_RNA"/>
</dbReference>
<dbReference type="PIR" id="PS0084">
    <property type="entry name" value="PS0084"/>
</dbReference>
<dbReference type="SMR" id="P20235"/>
<dbReference type="GO" id="GO:0019028">
    <property type="term" value="C:viral capsid"/>
    <property type="evidence" value="ECO:0007669"/>
    <property type="project" value="UniProtKB-KW"/>
</dbReference>
<dbReference type="GO" id="GO:0003968">
    <property type="term" value="F:RNA-directed RNA polymerase activity"/>
    <property type="evidence" value="ECO:0007669"/>
    <property type="project" value="UniProtKB-KW"/>
</dbReference>
<dbReference type="InterPro" id="IPR001592">
    <property type="entry name" value="Poty_coat"/>
</dbReference>
<dbReference type="Pfam" id="PF00767">
    <property type="entry name" value="Poty_coat"/>
    <property type="match status" value="1"/>
</dbReference>
<reference key="1">
    <citation type="journal article" date="1989" name="J. Gen. Virol.">
        <title>The use of 3' non-coding nucleotide sequences in the taxonomy of potyviruses: application to watermelon mosaic virus 2 and soybean mosaic virus-N.</title>
        <authorList>
            <person name="Frenkel M.J."/>
            <person name="Ward C.W."/>
            <person name="Shukla D.D."/>
        </authorList>
    </citation>
    <scope>NUCLEOTIDE SEQUENCE [GENOMIC RNA]</scope>
</reference>
<reference key="2">
    <citation type="journal article" date="1989" name="Arch. Virol.">
        <title>Coat protein of potyviruses. 6. Amino acid sequences suggest watermelon mosaic virus 2 and soybean mosaic virus-N are strains of the same potyvirus.</title>
        <authorList>
            <person name="Yu M.H."/>
            <person name="Frenkel M.J."/>
            <person name="McKern N.M."/>
            <person name="Shukla D.D."/>
            <person name="Strike P.M."/>
            <person name="Ward C.W."/>
        </authorList>
    </citation>
    <scope>NUCLEOTIDE SEQUENCE [GENOMIC RNA] OF 22-302</scope>
</reference>
<reference key="3">
    <citation type="journal article" date="2001" name="Virus Res.">
        <title>Potyvirus proteins: a wealth of functions.</title>
        <authorList>
            <person name="Urcuqui-Inchima S."/>
            <person name="Haenni A.L."/>
            <person name="Bernardi F."/>
        </authorList>
    </citation>
    <scope>REVIEW</scope>
</reference>
<name>POLG_WMV2A</name>
<proteinExistence type="inferred from homology"/>
<protein>
    <recommendedName>
        <fullName>Genome polyprotein</fullName>
    </recommendedName>
    <component>
        <recommendedName>
            <fullName>Nuclear inclusion protein B</fullName>
            <shortName>NI-B</shortName>
            <shortName>NIB</shortName>
        </recommendedName>
        <alternativeName>
            <fullName>RNA-directed RNA polymerase</fullName>
            <ecNumber>2.7.7.48</ecNumber>
        </alternativeName>
    </component>
    <component>
        <recommendedName>
            <fullName>Capsid protein</fullName>
            <shortName>CP</shortName>
        </recommendedName>
        <alternativeName>
            <fullName>Coat protein</fullName>
        </alternativeName>
    </component>
</protein>
<keyword id="KW-0167">Capsid protein</keyword>
<keyword id="KW-0548">Nucleotidyltransferase</keyword>
<keyword id="KW-0696">RNA-directed RNA polymerase</keyword>
<keyword id="KW-0808">Transferase</keyword>
<keyword id="KW-0946">Virion</keyword>
<comment type="function">
    <molecule>Nuclear inclusion protein B</molecule>
    <text>An RNA-dependent RNA polymerase that plays an essential role in the virus replication.</text>
</comment>
<comment type="function">
    <molecule>Capsid protein</molecule>
    <text evidence="2">Involved in aphid transmission, cell-to-cell and systemis movement, encapsidation of the viral RNA and in the regulation of viral RNA amplification.</text>
</comment>
<comment type="catalytic activity">
    <reaction evidence="3">
        <text>RNA(n) + a ribonucleoside 5'-triphosphate = RNA(n+1) + diphosphate</text>
        <dbReference type="Rhea" id="RHEA:21248"/>
        <dbReference type="Rhea" id="RHEA-COMP:14527"/>
        <dbReference type="Rhea" id="RHEA-COMP:17342"/>
        <dbReference type="ChEBI" id="CHEBI:33019"/>
        <dbReference type="ChEBI" id="CHEBI:61557"/>
        <dbReference type="ChEBI" id="CHEBI:140395"/>
        <dbReference type="EC" id="2.7.7.48"/>
    </reaction>
</comment>
<comment type="subcellular location">
    <molecule>Capsid protein</molecule>
    <subcellularLocation>
        <location evidence="5">Virion</location>
    </subcellularLocation>
</comment>
<comment type="PTM">
    <text evidence="1">Genome polyprotein of potyviruses undergoes post-translational proteolytic processing by the main proteinase NIa-pro resulting in the production of at least ten individual proteins. The P1 proteinase and the HC-pro cleave only their respective C-termini autocatalytically. 6K1 is essential for proper proteolytic separation of P3 from CI (By similarity).</text>
</comment>
<comment type="similarity">
    <text evidence="5">Belongs to the potyviridae genome polyprotein family.</text>
</comment>
<organism>
    <name type="scientific">Watermelon mosaic virus II (isolate Australia)</name>
    <dbReference type="NCBI Taxonomy" id="148358"/>
    <lineage>
        <taxon>Viruses</taxon>
        <taxon>Riboviria</taxon>
        <taxon>Orthornavirae</taxon>
        <taxon>Pisuviricota</taxon>
        <taxon>Stelpaviricetes</taxon>
        <taxon>Patatavirales</taxon>
        <taxon>Potyviridae</taxon>
        <taxon>Potyvirus</taxon>
        <taxon>Potyvirus citrulli</taxon>
        <taxon>Watermelon mosaic virus</taxon>
    </lineage>
</organism>
<feature type="chain" id="PRO_0000040493" description="Nuclear inclusion protein B" evidence="1">
    <location>
        <begin position="1" status="less than"/>
        <end position="21"/>
    </location>
</feature>
<feature type="chain" id="PRO_0000420032" description="Genome polyprotein">
    <location>
        <begin position="1"/>
        <end position="302"/>
    </location>
</feature>
<feature type="chain" id="PRO_0000040494" description="Capsid protein" evidence="1">
    <location>
        <begin position="22"/>
        <end position="302"/>
    </location>
</feature>
<feature type="region of interest" description="Disordered" evidence="4">
    <location>
        <begin position="28"/>
        <end position="72"/>
    </location>
</feature>
<feature type="compositionally biased region" description="Basic and acidic residues" evidence="4">
    <location>
        <begin position="28"/>
        <end position="46"/>
    </location>
</feature>
<feature type="compositionally biased region" description="Polar residues" evidence="4">
    <location>
        <begin position="47"/>
        <end position="63"/>
    </location>
</feature>
<feature type="site" description="Cleavage; by NIa-pro" evidence="1">
    <location>
        <begin position="21"/>
        <end position="22"/>
    </location>
</feature>
<feature type="non-terminal residue">
    <location>
        <position position="1"/>
    </location>
</feature>
<organismHost>
    <name type="scientific">Citrullus lanatus</name>
    <name type="common">Watermelon</name>
    <name type="synonym">Citrullus vulgaris</name>
    <dbReference type="NCBI Taxonomy" id="3654"/>
</organismHost>
<organismHost>
    <name type="scientific">Cucumis melo</name>
    <name type="common">Muskmelon</name>
    <dbReference type="NCBI Taxonomy" id="3656"/>
</organismHost>
<organismHost>
    <name type="scientific">Cucumis sativus</name>
    <name type="common">Cucumber</name>
    <dbReference type="NCBI Taxonomy" id="3659"/>
</organismHost>
<organismHost>
    <name type="scientific">Cucurbita pepo</name>
    <name type="common">Vegetable marrow</name>
    <name type="synonym">Summer squash</name>
    <dbReference type="NCBI Taxonomy" id="3663"/>
</organismHost>
<accession>P20235</accession>
<evidence type="ECO:0000250" key="1"/>
<evidence type="ECO:0000250" key="2">
    <source>
        <dbReference type="UniProtKB" id="P04517"/>
    </source>
</evidence>
<evidence type="ECO:0000255" key="3">
    <source>
        <dbReference type="PROSITE-ProRule" id="PRU00539"/>
    </source>
</evidence>
<evidence type="ECO:0000256" key="4">
    <source>
        <dbReference type="SAM" id="MobiDB-lite"/>
    </source>
</evidence>
<evidence type="ECO:0000305" key="5"/>